<accession>O05411</accession>
<name>YRPD_BACSU</name>
<reference key="1">
    <citation type="journal article" date="1997" name="Microbiology">
        <title>Sequence of the Bacillus subtilis genome region in the vicinity of the lev operon reveals two new extracytoplasmic function RNA polymerase sigma factors SigV and SigZ.</title>
        <authorList>
            <person name="Sorokin A."/>
            <person name="Bolotin A."/>
            <person name="Purnelle B."/>
            <person name="Hilbert H."/>
            <person name="Lauber J."/>
            <person name="Duesterhoeft A."/>
            <person name="Ehrlich S.D."/>
        </authorList>
    </citation>
    <scope>NUCLEOTIDE SEQUENCE [GENOMIC DNA]</scope>
    <source>
        <strain>168</strain>
    </source>
</reference>
<reference key="2">
    <citation type="journal article" date="1997" name="Nature">
        <title>The complete genome sequence of the Gram-positive bacterium Bacillus subtilis.</title>
        <authorList>
            <person name="Kunst F."/>
            <person name="Ogasawara N."/>
            <person name="Moszer I."/>
            <person name="Albertini A.M."/>
            <person name="Alloni G."/>
            <person name="Azevedo V."/>
            <person name="Bertero M.G."/>
            <person name="Bessieres P."/>
            <person name="Bolotin A."/>
            <person name="Borchert S."/>
            <person name="Borriss R."/>
            <person name="Boursier L."/>
            <person name="Brans A."/>
            <person name="Braun M."/>
            <person name="Brignell S.C."/>
            <person name="Bron S."/>
            <person name="Brouillet S."/>
            <person name="Bruschi C.V."/>
            <person name="Caldwell B."/>
            <person name="Capuano V."/>
            <person name="Carter N.M."/>
            <person name="Choi S.-K."/>
            <person name="Codani J.-J."/>
            <person name="Connerton I.F."/>
            <person name="Cummings N.J."/>
            <person name="Daniel R.A."/>
            <person name="Denizot F."/>
            <person name="Devine K.M."/>
            <person name="Duesterhoeft A."/>
            <person name="Ehrlich S.D."/>
            <person name="Emmerson P.T."/>
            <person name="Entian K.-D."/>
            <person name="Errington J."/>
            <person name="Fabret C."/>
            <person name="Ferrari E."/>
            <person name="Foulger D."/>
            <person name="Fritz C."/>
            <person name="Fujita M."/>
            <person name="Fujita Y."/>
            <person name="Fuma S."/>
            <person name="Galizzi A."/>
            <person name="Galleron N."/>
            <person name="Ghim S.-Y."/>
            <person name="Glaser P."/>
            <person name="Goffeau A."/>
            <person name="Golightly E.J."/>
            <person name="Grandi G."/>
            <person name="Guiseppi G."/>
            <person name="Guy B.J."/>
            <person name="Haga K."/>
            <person name="Haiech J."/>
            <person name="Harwood C.R."/>
            <person name="Henaut A."/>
            <person name="Hilbert H."/>
            <person name="Holsappel S."/>
            <person name="Hosono S."/>
            <person name="Hullo M.-F."/>
            <person name="Itaya M."/>
            <person name="Jones L.-M."/>
            <person name="Joris B."/>
            <person name="Karamata D."/>
            <person name="Kasahara Y."/>
            <person name="Klaerr-Blanchard M."/>
            <person name="Klein C."/>
            <person name="Kobayashi Y."/>
            <person name="Koetter P."/>
            <person name="Koningstein G."/>
            <person name="Krogh S."/>
            <person name="Kumano M."/>
            <person name="Kurita K."/>
            <person name="Lapidus A."/>
            <person name="Lardinois S."/>
            <person name="Lauber J."/>
            <person name="Lazarevic V."/>
            <person name="Lee S.-M."/>
            <person name="Levine A."/>
            <person name="Liu H."/>
            <person name="Masuda S."/>
            <person name="Mauel C."/>
            <person name="Medigue C."/>
            <person name="Medina N."/>
            <person name="Mellado R.P."/>
            <person name="Mizuno M."/>
            <person name="Moestl D."/>
            <person name="Nakai S."/>
            <person name="Noback M."/>
            <person name="Noone D."/>
            <person name="O'Reilly M."/>
            <person name="Ogawa K."/>
            <person name="Ogiwara A."/>
            <person name="Oudega B."/>
            <person name="Park S.-H."/>
            <person name="Parro V."/>
            <person name="Pohl T.M."/>
            <person name="Portetelle D."/>
            <person name="Porwollik S."/>
            <person name="Prescott A.M."/>
            <person name="Presecan E."/>
            <person name="Pujic P."/>
            <person name="Purnelle B."/>
            <person name="Rapoport G."/>
            <person name="Rey M."/>
            <person name="Reynolds S."/>
            <person name="Rieger M."/>
            <person name="Rivolta C."/>
            <person name="Rocha E."/>
            <person name="Roche B."/>
            <person name="Rose M."/>
            <person name="Sadaie Y."/>
            <person name="Sato T."/>
            <person name="Scanlan E."/>
            <person name="Schleich S."/>
            <person name="Schroeter R."/>
            <person name="Scoffone F."/>
            <person name="Sekiguchi J."/>
            <person name="Sekowska A."/>
            <person name="Seror S.J."/>
            <person name="Serror P."/>
            <person name="Shin B.-S."/>
            <person name="Soldo B."/>
            <person name="Sorokin A."/>
            <person name="Tacconi E."/>
            <person name="Takagi T."/>
            <person name="Takahashi H."/>
            <person name="Takemaru K."/>
            <person name="Takeuchi M."/>
            <person name="Tamakoshi A."/>
            <person name="Tanaka T."/>
            <person name="Terpstra P."/>
            <person name="Tognoni A."/>
            <person name="Tosato V."/>
            <person name="Uchiyama S."/>
            <person name="Vandenbol M."/>
            <person name="Vannier F."/>
            <person name="Vassarotti A."/>
            <person name="Viari A."/>
            <person name="Wambutt R."/>
            <person name="Wedler E."/>
            <person name="Wedler H."/>
            <person name="Weitzenegger T."/>
            <person name="Winters P."/>
            <person name="Wipat A."/>
            <person name="Yamamoto H."/>
            <person name="Yamane K."/>
            <person name="Yasumoto K."/>
            <person name="Yata K."/>
            <person name="Yoshida K."/>
            <person name="Yoshikawa H.-F."/>
            <person name="Zumstein E."/>
            <person name="Yoshikawa H."/>
            <person name="Danchin A."/>
        </authorList>
    </citation>
    <scope>NUCLEOTIDE SEQUENCE [LARGE SCALE GENOMIC DNA]</scope>
    <source>
        <strain>168</strain>
    </source>
</reference>
<feature type="chain" id="PRO_0000049881" description="Uncharacterized protein YrpD">
    <location>
        <begin position="1"/>
        <end position="235"/>
    </location>
</feature>
<feature type="strand" evidence="2">
    <location>
        <begin position="35"/>
        <end position="38"/>
    </location>
</feature>
<feature type="strand" evidence="2">
    <location>
        <begin position="42"/>
        <end position="49"/>
    </location>
</feature>
<feature type="strand" evidence="2">
    <location>
        <begin position="54"/>
        <end position="61"/>
    </location>
</feature>
<feature type="strand" evidence="2">
    <location>
        <begin position="70"/>
        <end position="77"/>
    </location>
</feature>
<feature type="strand" evidence="2">
    <location>
        <begin position="79"/>
        <end position="83"/>
    </location>
</feature>
<feature type="strand" evidence="2">
    <location>
        <begin position="85"/>
        <end position="92"/>
    </location>
</feature>
<feature type="turn" evidence="2">
    <location>
        <begin position="93"/>
        <end position="96"/>
    </location>
</feature>
<feature type="strand" evidence="2">
    <location>
        <begin position="97"/>
        <end position="104"/>
    </location>
</feature>
<feature type="helix" evidence="2">
    <location>
        <begin position="109"/>
        <end position="111"/>
    </location>
</feature>
<feature type="strand" evidence="2">
    <location>
        <begin position="113"/>
        <end position="117"/>
    </location>
</feature>
<feature type="helix" evidence="2">
    <location>
        <begin position="118"/>
        <end position="121"/>
    </location>
</feature>
<feature type="strand" evidence="2">
    <location>
        <begin position="132"/>
        <end position="141"/>
    </location>
</feature>
<feature type="strand" evidence="2">
    <location>
        <begin position="144"/>
        <end position="153"/>
    </location>
</feature>
<feature type="strand" evidence="2">
    <location>
        <begin position="158"/>
        <end position="167"/>
    </location>
</feature>
<feature type="strand" evidence="2">
    <location>
        <begin position="173"/>
        <end position="183"/>
    </location>
</feature>
<feature type="helix" evidence="2">
    <location>
        <begin position="188"/>
        <end position="190"/>
    </location>
</feature>
<feature type="strand" evidence="2">
    <location>
        <begin position="193"/>
        <end position="204"/>
    </location>
</feature>
<feature type="strand" evidence="2">
    <location>
        <begin position="212"/>
        <end position="223"/>
    </location>
</feature>
<feature type="strand" evidence="2">
    <location>
        <begin position="228"/>
        <end position="233"/>
    </location>
</feature>
<gene>
    <name type="primary">yrpD</name>
    <name type="ordered locus">BSU26820</name>
</gene>
<protein>
    <recommendedName>
        <fullName>Uncharacterized protein YrpD</fullName>
    </recommendedName>
</protein>
<dbReference type="EMBL" id="U93875">
    <property type="protein sequence ID" value="AAB80889.1"/>
    <property type="molecule type" value="Genomic_DNA"/>
</dbReference>
<dbReference type="EMBL" id="AL009126">
    <property type="protein sequence ID" value="CAB14623.1"/>
    <property type="molecule type" value="Genomic_DNA"/>
</dbReference>
<dbReference type="PIR" id="D69978">
    <property type="entry name" value="D69978"/>
</dbReference>
<dbReference type="RefSeq" id="NP_390559.1">
    <property type="nucleotide sequence ID" value="NC_000964.3"/>
</dbReference>
<dbReference type="RefSeq" id="WP_009967863.1">
    <property type="nucleotide sequence ID" value="NZ_OZ025638.1"/>
</dbReference>
<dbReference type="PDB" id="8XAI">
    <property type="method" value="X-ray"/>
    <property type="resolution" value="1.83 A"/>
    <property type="chains" value="A/B/C/D=1-235"/>
</dbReference>
<dbReference type="PDBsum" id="8XAI"/>
<dbReference type="SMR" id="O05411"/>
<dbReference type="FunCoup" id="O05411">
    <property type="interactions" value="54"/>
</dbReference>
<dbReference type="STRING" id="224308.BSU26820"/>
<dbReference type="PaxDb" id="224308-BSU26820"/>
<dbReference type="DNASU" id="937397"/>
<dbReference type="EnsemblBacteria" id="CAB14623">
    <property type="protein sequence ID" value="CAB14623"/>
    <property type="gene ID" value="BSU_26820"/>
</dbReference>
<dbReference type="GeneID" id="937397"/>
<dbReference type="KEGG" id="bsu:BSU26820"/>
<dbReference type="PATRIC" id="fig|224308.179.peg.2913"/>
<dbReference type="eggNOG" id="ENOG5032SKI">
    <property type="taxonomic scope" value="Bacteria"/>
</dbReference>
<dbReference type="InParanoid" id="O05411"/>
<dbReference type="OrthoDB" id="2907729at2"/>
<dbReference type="BioCyc" id="BSUB:BSU26820-MONOMER"/>
<dbReference type="Proteomes" id="UP000001570">
    <property type="component" value="Chromosome"/>
</dbReference>
<dbReference type="CDD" id="cd13427">
    <property type="entry name" value="YncM_like"/>
    <property type="match status" value="1"/>
</dbReference>
<dbReference type="Gene3D" id="2.60.120.1270">
    <property type="match status" value="1"/>
</dbReference>
<dbReference type="InterPro" id="IPR029143">
    <property type="entry name" value="YrpD"/>
</dbReference>
<dbReference type="InterPro" id="IPR038682">
    <property type="entry name" value="YrpD-like_sf"/>
</dbReference>
<dbReference type="Pfam" id="PF15493">
    <property type="entry name" value="YrpD"/>
    <property type="match status" value="1"/>
</dbReference>
<proteinExistence type="evidence at protein level"/>
<keyword id="KW-0002">3D-structure</keyword>
<keyword id="KW-1185">Reference proteome</keyword>
<sequence length="235" mass="24876">MMKKGLLAGALTATVLFGTCAVDVPGIISPKTAEAASQLTDGIGGRAYLNSNGAILVTKIQLPSSTQVSNGTAYIYSGFSGGTESDIGFQYSDKYNVWKPYMKVGSKGQDQVQYLEGGSQFTNTKGFRPGSTVQLTIYKNLNGNTRATYWGTNNAGYNGRLISEISKTNVGSISKWKALATVATTGSRQSIKSNFSTSFTNITIDNKAITPVIDTQDFAKVTVSGNSVSLSVVKN</sequence>
<organism>
    <name type="scientific">Bacillus subtilis (strain 168)</name>
    <dbReference type="NCBI Taxonomy" id="224308"/>
    <lineage>
        <taxon>Bacteria</taxon>
        <taxon>Bacillati</taxon>
        <taxon>Bacillota</taxon>
        <taxon>Bacilli</taxon>
        <taxon>Bacillales</taxon>
        <taxon>Bacillaceae</taxon>
        <taxon>Bacillus</taxon>
    </lineage>
</organism>
<evidence type="ECO:0000305" key="1"/>
<evidence type="ECO:0007829" key="2">
    <source>
        <dbReference type="PDB" id="8XAI"/>
    </source>
</evidence>
<comment type="similarity">
    <text evidence="1">To B.subtilis YncM.</text>
</comment>